<dbReference type="EC" id="2.7.7.72" evidence="1"/>
<dbReference type="EC" id="3.1.3.-" evidence="1"/>
<dbReference type="EC" id="3.1.4.-" evidence="1"/>
<dbReference type="EMBL" id="CU928145">
    <property type="protein sequence ID" value="CAU99605.1"/>
    <property type="molecule type" value="Genomic_DNA"/>
</dbReference>
<dbReference type="RefSeq" id="WP_000708500.1">
    <property type="nucleotide sequence ID" value="NC_011748.1"/>
</dbReference>
<dbReference type="SMR" id="B7LGZ2"/>
<dbReference type="GeneID" id="75205357"/>
<dbReference type="KEGG" id="eck:EC55989_3471"/>
<dbReference type="HOGENOM" id="CLU_015961_1_1_6"/>
<dbReference type="Proteomes" id="UP000000746">
    <property type="component" value="Chromosome"/>
</dbReference>
<dbReference type="GO" id="GO:0005524">
    <property type="term" value="F:ATP binding"/>
    <property type="evidence" value="ECO:0007669"/>
    <property type="project" value="UniProtKB-UniRule"/>
</dbReference>
<dbReference type="GO" id="GO:0004810">
    <property type="term" value="F:CCA tRNA nucleotidyltransferase activity"/>
    <property type="evidence" value="ECO:0007669"/>
    <property type="project" value="UniProtKB-UniRule"/>
</dbReference>
<dbReference type="GO" id="GO:0004112">
    <property type="term" value="F:cyclic-nucleotide phosphodiesterase activity"/>
    <property type="evidence" value="ECO:0007669"/>
    <property type="project" value="UniProtKB-UniRule"/>
</dbReference>
<dbReference type="GO" id="GO:0000287">
    <property type="term" value="F:magnesium ion binding"/>
    <property type="evidence" value="ECO:0007669"/>
    <property type="project" value="UniProtKB-UniRule"/>
</dbReference>
<dbReference type="GO" id="GO:0016791">
    <property type="term" value="F:phosphatase activity"/>
    <property type="evidence" value="ECO:0007669"/>
    <property type="project" value="UniProtKB-UniRule"/>
</dbReference>
<dbReference type="GO" id="GO:0000049">
    <property type="term" value="F:tRNA binding"/>
    <property type="evidence" value="ECO:0007669"/>
    <property type="project" value="UniProtKB-UniRule"/>
</dbReference>
<dbReference type="GO" id="GO:0042245">
    <property type="term" value="P:RNA repair"/>
    <property type="evidence" value="ECO:0007669"/>
    <property type="project" value="UniProtKB-KW"/>
</dbReference>
<dbReference type="GO" id="GO:0001680">
    <property type="term" value="P:tRNA 3'-terminal CCA addition"/>
    <property type="evidence" value="ECO:0007669"/>
    <property type="project" value="UniProtKB-UniRule"/>
</dbReference>
<dbReference type="CDD" id="cd00077">
    <property type="entry name" value="HDc"/>
    <property type="match status" value="1"/>
</dbReference>
<dbReference type="CDD" id="cd05398">
    <property type="entry name" value="NT_ClassII-CCAase"/>
    <property type="match status" value="1"/>
</dbReference>
<dbReference type="FunFam" id="1.10.3090.10:FF:000001">
    <property type="entry name" value="Multifunctional CCA protein"/>
    <property type="match status" value="1"/>
</dbReference>
<dbReference type="FunFam" id="3.30.460.10:FF:000016">
    <property type="entry name" value="Multifunctional CCA protein"/>
    <property type="match status" value="1"/>
</dbReference>
<dbReference type="Gene3D" id="3.30.460.10">
    <property type="entry name" value="Beta Polymerase, domain 2"/>
    <property type="match status" value="1"/>
</dbReference>
<dbReference type="Gene3D" id="1.10.3090.10">
    <property type="entry name" value="cca-adding enzyme, domain 2"/>
    <property type="match status" value="1"/>
</dbReference>
<dbReference type="HAMAP" id="MF_01261">
    <property type="entry name" value="CCA_bact_type1"/>
    <property type="match status" value="1"/>
</dbReference>
<dbReference type="HAMAP" id="MF_01262">
    <property type="entry name" value="CCA_bact_type2"/>
    <property type="match status" value="1"/>
</dbReference>
<dbReference type="InterPro" id="IPR012006">
    <property type="entry name" value="CCA_bact"/>
</dbReference>
<dbReference type="InterPro" id="IPR003607">
    <property type="entry name" value="HD/PDEase_dom"/>
</dbReference>
<dbReference type="InterPro" id="IPR006674">
    <property type="entry name" value="HD_domain"/>
</dbReference>
<dbReference type="InterPro" id="IPR043519">
    <property type="entry name" value="NT_sf"/>
</dbReference>
<dbReference type="InterPro" id="IPR002646">
    <property type="entry name" value="PolA_pol_head_dom"/>
</dbReference>
<dbReference type="InterPro" id="IPR032828">
    <property type="entry name" value="PolyA_RNA-bd"/>
</dbReference>
<dbReference type="InterPro" id="IPR050124">
    <property type="entry name" value="tRNA_CCA-adding_enzyme"/>
</dbReference>
<dbReference type="NCBIfam" id="NF008137">
    <property type="entry name" value="PRK10885.1"/>
    <property type="match status" value="1"/>
</dbReference>
<dbReference type="PANTHER" id="PTHR47545">
    <property type="entry name" value="MULTIFUNCTIONAL CCA PROTEIN"/>
    <property type="match status" value="1"/>
</dbReference>
<dbReference type="PANTHER" id="PTHR47545:SF1">
    <property type="entry name" value="MULTIFUNCTIONAL CCA PROTEIN"/>
    <property type="match status" value="1"/>
</dbReference>
<dbReference type="Pfam" id="PF01966">
    <property type="entry name" value="HD"/>
    <property type="match status" value="1"/>
</dbReference>
<dbReference type="Pfam" id="PF01743">
    <property type="entry name" value="PolyA_pol"/>
    <property type="match status" value="1"/>
</dbReference>
<dbReference type="Pfam" id="PF12627">
    <property type="entry name" value="PolyA_pol_RNAbd"/>
    <property type="match status" value="1"/>
</dbReference>
<dbReference type="PIRSF" id="PIRSF000813">
    <property type="entry name" value="CCA_bact"/>
    <property type="match status" value="1"/>
</dbReference>
<dbReference type="SUPFAM" id="SSF81301">
    <property type="entry name" value="Nucleotidyltransferase"/>
    <property type="match status" value="1"/>
</dbReference>
<dbReference type="SUPFAM" id="SSF81891">
    <property type="entry name" value="Poly A polymerase C-terminal region-like"/>
    <property type="match status" value="1"/>
</dbReference>
<dbReference type="PROSITE" id="PS51831">
    <property type="entry name" value="HD"/>
    <property type="match status" value="1"/>
</dbReference>
<feature type="chain" id="PRO_1000165120" description="Multifunctional CCA protein">
    <location>
        <begin position="1"/>
        <end position="412"/>
    </location>
</feature>
<feature type="domain" description="HD" evidence="1">
    <location>
        <begin position="228"/>
        <end position="329"/>
    </location>
</feature>
<feature type="binding site" evidence="1">
    <location>
        <position position="8"/>
    </location>
    <ligand>
        <name>ATP</name>
        <dbReference type="ChEBI" id="CHEBI:30616"/>
    </ligand>
</feature>
<feature type="binding site" evidence="1">
    <location>
        <position position="8"/>
    </location>
    <ligand>
        <name>CTP</name>
        <dbReference type="ChEBI" id="CHEBI:37563"/>
    </ligand>
</feature>
<feature type="binding site" evidence="1">
    <location>
        <position position="11"/>
    </location>
    <ligand>
        <name>ATP</name>
        <dbReference type="ChEBI" id="CHEBI:30616"/>
    </ligand>
</feature>
<feature type="binding site" evidence="1">
    <location>
        <position position="11"/>
    </location>
    <ligand>
        <name>CTP</name>
        <dbReference type="ChEBI" id="CHEBI:37563"/>
    </ligand>
</feature>
<feature type="binding site" evidence="1">
    <location>
        <position position="21"/>
    </location>
    <ligand>
        <name>Mg(2+)</name>
        <dbReference type="ChEBI" id="CHEBI:18420"/>
    </ligand>
</feature>
<feature type="binding site" evidence="1">
    <location>
        <position position="23"/>
    </location>
    <ligand>
        <name>Mg(2+)</name>
        <dbReference type="ChEBI" id="CHEBI:18420"/>
    </ligand>
</feature>
<feature type="binding site" evidence="1">
    <location>
        <position position="91"/>
    </location>
    <ligand>
        <name>ATP</name>
        <dbReference type="ChEBI" id="CHEBI:30616"/>
    </ligand>
</feature>
<feature type="binding site" evidence="1">
    <location>
        <position position="91"/>
    </location>
    <ligand>
        <name>CTP</name>
        <dbReference type="ChEBI" id="CHEBI:37563"/>
    </ligand>
</feature>
<feature type="binding site" evidence="1">
    <location>
        <position position="137"/>
    </location>
    <ligand>
        <name>ATP</name>
        <dbReference type="ChEBI" id="CHEBI:30616"/>
    </ligand>
</feature>
<feature type="binding site" evidence="1">
    <location>
        <position position="137"/>
    </location>
    <ligand>
        <name>CTP</name>
        <dbReference type="ChEBI" id="CHEBI:37563"/>
    </ligand>
</feature>
<feature type="binding site" evidence="1">
    <location>
        <position position="140"/>
    </location>
    <ligand>
        <name>ATP</name>
        <dbReference type="ChEBI" id="CHEBI:30616"/>
    </ligand>
</feature>
<feature type="binding site" evidence="1">
    <location>
        <position position="140"/>
    </location>
    <ligand>
        <name>CTP</name>
        <dbReference type="ChEBI" id="CHEBI:37563"/>
    </ligand>
</feature>
<organism>
    <name type="scientific">Escherichia coli (strain 55989 / EAEC)</name>
    <dbReference type="NCBI Taxonomy" id="585055"/>
    <lineage>
        <taxon>Bacteria</taxon>
        <taxon>Pseudomonadati</taxon>
        <taxon>Pseudomonadota</taxon>
        <taxon>Gammaproteobacteria</taxon>
        <taxon>Enterobacterales</taxon>
        <taxon>Enterobacteriaceae</taxon>
        <taxon>Escherichia</taxon>
    </lineage>
</organism>
<keyword id="KW-0067">ATP-binding</keyword>
<keyword id="KW-0378">Hydrolase</keyword>
<keyword id="KW-0460">Magnesium</keyword>
<keyword id="KW-0479">Metal-binding</keyword>
<keyword id="KW-0511">Multifunctional enzyme</keyword>
<keyword id="KW-0533">Nickel</keyword>
<keyword id="KW-0547">Nucleotide-binding</keyword>
<keyword id="KW-0548">Nucleotidyltransferase</keyword>
<keyword id="KW-1185">Reference proteome</keyword>
<keyword id="KW-0692">RNA repair</keyword>
<keyword id="KW-0694">RNA-binding</keyword>
<keyword id="KW-0808">Transferase</keyword>
<keyword id="KW-0819">tRNA processing</keyword>
<comment type="function">
    <text evidence="1">Catalyzes the addition and repair of the essential 3'-terminal CCA sequence in tRNAs without using a nucleic acid template. Adds these three nucleotides in the order of C, C, and A to the tRNA nucleotide-73, using CTP and ATP as substrates and producing inorganic pyrophosphate. tRNA 3'-terminal CCA addition is required both for tRNA processing and repair. Also involved in tRNA surveillance by mediating tandem CCA addition to generate a CCACCA at the 3' terminus of unstable tRNAs. While stable tRNAs receive only 3'-terminal CCA, unstable tRNAs are marked with CCACCA and rapidly degraded.</text>
</comment>
<comment type="catalytic activity">
    <reaction evidence="1">
        <text>a tRNA precursor + 2 CTP + ATP = a tRNA with a 3' CCA end + 3 diphosphate</text>
        <dbReference type="Rhea" id="RHEA:14433"/>
        <dbReference type="Rhea" id="RHEA-COMP:10465"/>
        <dbReference type="Rhea" id="RHEA-COMP:10468"/>
        <dbReference type="ChEBI" id="CHEBI:30616"/>
        <dbReference type="ChEBI" id="CHEBI:33019"/>
        <dbReference type="ChEBI" id="CHEBI:37563"/>
        <dbReference type="ChEBI" id="CHEBI:74896"/>
        <dbReference type="ChEBI" id="CHEBI:83071"/>
        <dbReference type="EC" id="2.7.7.72"/>
    </reaction>
</comment>
<comment type="catalytic activity">
    <reaction evidence="1">
        <text>a tRNA with a 3' CCA end + 2 CTP + ATP = a tRNA with a 3' CCACCA end + 3 diphosphate</text>
        <dbReference type="Rhea" id="RHEA:76235"/>
        <dbReference type="Rhea" id="RHEA-COMP:10468"/>
        <dbReference type="Rhea" id="RHEA-COMP:18655"/>
        <dbReference type="ChEBI" id="CHEBI:30616"/>
        <dbReference type="ChEBI" id="CHEBI:33019"/>
        <dbReference type="ChEBI" id="CHEBI:37563"/>
        <dbReference type="ChEBI" id="CHEBI:83071"/>
        <dbReference type="ChEBI" id="CHEBI:195187"/>
    </reaction>
    <physiologicalReaction direction="left-to-right" evidence="1">
        <dbReference type="Rhea" id="RHEA:76236"/>
    </physiologicalReaction>
</comment>
<comment type="cofactor">
    <cofactor evidence="1">
        <name>Mg(2+)</name>
        <dbReference type="ChEBI" id="CHEBI:18420"/>
    </cofactor>
    <text evidence="1">Magnesium is required for nucleotidyltransferase activity.</text>
</comment>
<comment type="cofactor">
    <cofactor evidence="1">
        <name>Ni(2+)</name>
        <dbReference type="ChEBI" id="CHEBI:49786"/>
    </cofactor>
    <text evidence="1">Nickel for phosphatase activity.</text>
</comment>
<comment type="subunit">
    <text evidence="1">Monomer. Can also form homodimers and oligomers.</text>
</comment>
<comment type="domain">
    <text evidence="1">Comprises two domains: an N-terminal domain containing the nucleotidyltransferase activity and a C-terminal HD domain associated with both phosphodiesterase and phosphatase activities.</text>
</comment>
<comment type="miscellaneous">
    <text evidence="1">A single active site specifically recognizes both ATP and CTP and is responsible for their addition.</text>
</comment>
<comment type="similarity">
    <text evidence="1">Belongs to the tRNA nucleotidyltransferase/poly(A) polymerase family. Bacterial CCA-adding enzyme type 1 subfamily.</text>
</comment>
<name>CCA_ECO55</name>
<sequence>MKIYLVGGAVRDALLGLPVKDRDWVVVGSTPQEMLDAGYQQVGRDFPVFLHPQTHEEYALARTERKSGSGYTGFTCYAAPDVTLEDDLKRRDLTINALAQDDNGEIIDPYNGLGDLQNRLLRHVSPAFGEDPLRVLRVARFAARYAHLGFRIADETLTLMREMTHAGELEHLTPERVWKETESALTTRNPQVFFQVLRDCGALRVLFPEIDALFGVPAPARWHPEIDTGIHTLMTLSMAAMLSPQVDVRFATLCHDLGKGLTPPELWPRHHGHGPAGVKLVEQLCQRLRVPNEIRDLARLVAEFHDLIHTFPMLNPKTIVKLFDSIDAWRKPQRVEQLALTSEADVRGRTGFESADYPQGRWLREAWEVAQSVPTKAVVEAGFKGVEIREELTRRRIAAIASWKEQRCPKPD</sequence>
<evidence type="ECO:0000255" key="1">
    <source>
        <dbReference type="HAMAP-Rule" id="MF_01261"/>
    </source>
</evidence>
<protein>
    <recommendedName>
        <fullName evidence="1">Multifunctional CCA protein</fullName>
    </recommendedName>
    <domain>
        <recommendedName>
            <fullName evidence="1">CCA-adding enzyme</fullName>
            <ecNumber evidence="1">2.7.7.72</ecNumber>
        </recommendedName>
        <alternativeName>
            <fullName evidence="1">CCA tRNA nucleotidyltransferase</fullName>
        </alternativeName>
        <alternativeName>
            <fullName evidence="1">tRNA CCA-pyrophosphorylase</fullName>
        </alternativeName>
        <alternativeName>
            <fullName evidence="1">tRNA adenylyl-/cytidylyl-transferase</fullName>
        </alternativeName>
        <alternativeName>
            <fullName evidence="1">tRNA nucleotidyltransferase</fullName>
        </alternativeName>
        <alternativeName>
            <fullName evidence="1">tRNA-NT</fullName>
        </alternativeName>
    </domain>
    <domain>
        <recommendedName>
            <fullName evidence="1">2'-nucleotidase</fullName>
            <ecNumber evidence="1">3.1.3.-</ecNumber>
        </recommendedName>
    </domain>
    <domain>
        <recommendedName>
            <fullName evidence="1">2',3'-cyclic phosphodiesterase</fullName>
            <ecNumber evidence="1">3.1.4.-</ecNumber>
        </recommendedName>
    </domain>
    <domain>
        <recommendedName>
            <fullName evidence="1">Phosphatase</fullName>
            <ecNumber evidence="1">3.1.3.-</ecNumber>
        </recommendedName>
    </domain>
</protein>
<proteinExistence type="inferred from homology"/>
<reference key="1">
    <citation type="journal article" date="2009" name="PLoS Genet.">
        <title>Organised genome dynamics in the Escherichia coli species results in highly diverse adaptive paths.</title>
        <authorList>
            <person name="Touchon M."/>
            <person name="Hoede C."/>
            <person name="Tenaillon O."/>
            <person name="Barbe V."/>
            <person name="Baeriswyl S."/>
            <person name="Bidet P."/>
            <person name="Bingen E."/>
            <person name="Bonacorsi S."/>
            <person name="Bouchier C."/>
            <person name="Bouvet O."/>
            <person name="Calteau A."/>
            <person name="Chiapello H."/>
            <person name="Clermont O."/>
            <person name="Cruveiller S."/>
            <person name="Danchin A."/>
            <person name="Diard M."/>
            <person name="Dossat C."/>
            <person name="Karoui M.E."/>
            <person name="Frapy E."/>
            <person name="Garry L."/>
            <person name="Ghigo J.M."/>
            <person name="Gilles A.M."/>
            <person name="Johnson J."/>
            <person name="Le Bouguenec C."/>
            <person name="Lescat M."/>
            <person name="Mangenot S."/>
            <person name="Martinez-Jehanne V."/>
            <person name="Matic I."/>
            <person name="Nassif X."/>
            <person name="Oztas S."/>
            <person name="Petit M.A."/>
            <person name="Pichon C."/>
            <person name="Rouy Z."/>
            <person name="Ruf C.S."/>
            <person name="Schneider D."/>
            <person name="Tourret J."/>
            <person name="Vacherie B."/>
            <person name="Vallenet D."/>
            <person name="Medigue C."/>
            <person name="Rocha E.P.C."/>
            <person name="Denamur E."/>
        </authorList>
    </citation>
    <scope>NUCLEOTIDE SEQUENCE [LARGE SCALE GENOMIC DNA]</scope>
    <source>
        <strain>55989 / EAEC</strain>
    </source>
</reference>
<accession>B7LGZ2</accession>
<gene>
    <name evidence="1" type="primary">cca</name>
    <name type="ordered locus">EC55989_3471</name>
</gene>